<feature type="chain" id="PRO_0000394778" description="UPF0763 protein Cj0993c">
    <location>
        <begin position="1"/>
        <end position="163"/>
    </location>
</feature>
<proteinExistence type="inferred from homology"/>
<name>Y993_CAMJE</name>
<reference key="1">
    <citation type="journal article" date="2000" name="Nature">
        <title>The genome sequence of the food-borne pathogen Campylobacter jejuni reveals hypervariable sequences.</title>
        <authorList>
            <person name="Parkhill J."/>
            <person name="Wren B.W."/>
            <person name="Mungall K.L."/>
            <person name="Ketley J.M."/>
            <person name="Churcher C.M."/>
            <person name="Basham D."/>
            <person name="Chillingworth T."/>
            <person name="Davies R.M."/>
            <person name="Feltwell T."/>
            <person name="Holroyd S."/>
            <person name="Jagels K."/>
            <person name="Karlyshev A.V."/>
            <person name="Moule S."/>
            <person name="Pallen M.J."/>
            <person name="Penn C.W."/>
            <person name="Quail M.A."/>
            <person name="Rajandream M.A."/>
            <person name="Rutherford K.M."/>
            <person name="van Vliet A.H.M."/>
            <person name="Whitehead S."/>
            <person name="Barrell B.G."/>
        </authorList>
    </citation>
    <scope>NUCLEOTIDE SEQUENCE [LARGE SCALE GENOMIC DNA]</scope>
    <source>
        <strain>ATCC 700819 / NCTC 11168</strain>
    </source>
</reference>
<protein>
    <recommendedName>
        <fullName evidence="1">UPF0763 protein Cj0993c</fullName>
    </recommendedName>
</protein>
<gene>
    <name type="ordered locus">Cj0993c</name>
</gene>
<organism>
    <name type="scientific">Campylobacter jejuni subsp. jejuni serotype O:2 (strain ATCC 700819 / NCTC 11168)</name>
    <dbReference type="NCBI Taxonomy" id="192222"/>
    <lineage>
        <taxon>Bacteria</taxon>
        <taxon>Pseudomonadati</taxon>
        <taxon>Campylobacterota</taxon>
        <taxon>Epsilonproteobacteria</taxon>
        <taxon>Campylobacterales</taxon>
        <taxon>Campylobacteraceae</taxon>
        <taxon>Campylobacter</taxon>
    </lineage>
</organism>
<sequence length="163" mass="19238">MKELEKYSTCLKRIDEFSQNLGIKKKDRTIFKMKQSENENEKCLVLENGSFDSPEPWFVIDENDEIHTLLSLQSLKNILESLKQSQKENFELRLEKAIYQQIPVDFNDVWTVAMDEIKQKAQNGTMEVSIDLEKLISKIKQEHPNLFVDMQAMIERVNQNERL</sequence>
<evidence type="ECO:0000255" key="1">
    <source>
        <dbReference type="HAMAP-Rule" id="MF_02110"/>
    </source>
</evidence>
<comment type="similarity">
    <text evidence="1">Belongs to the UPF0763 family.</text>
</comment>
<accession>Q0P9Q9</accession>
<keyword id="KW-1185">Reference proteome</keyword>
<dbReference type="EMBL" id="AL111168">
    <property type="protein sequence ID" value="CAL35111.1"/>
    <property type="molecule type" value="Genomic_DNA"/>
</dbReference>
<dbReference type="PIR" id="F81374">
    <property type="entry name" value="F81374"/>
</dbReference>
<dbReference type="RefSeq" id="WP_002853412.1">
    <property type="nucleotide sequence ID" value="NZ_SZUC01000001.1"/>
</dbReference>
<dbReference type="RefSeq" id="YP_002344388.1">
    <property type="nucleotide sequence ID" value="NC_002163.1"/>
</dbReference>
<dbReference type="SMR" id="Q0P9Q9"/>
<dbReference type="IntAct" id="Q0P9Q9">
    <property type="interactions" value="31"/>
</dbReference>
<dbReference type="STRING" id="192222.Cj0993c"/>
<dbReference type="PaxDb" id="192222-Cj0993c"/>
<dbReference type="EnsemblBacteria" id="CAL35111">
    <property type="protein sequence ID" value="CAL35111"/>
    <property type="gene ID" value="Cj0993c"/>
</dbReference>
<dbReference type="GeneID" id="905284"/>
<dbReference type="KEGG" id="cje:Cj0993c"/>
<dbReference type="PATRIC" id="fig|192222.6.peg.975"/>
<dbReference type="eggNOG" id="ENOG5030YCA">
    <property type="taxonomic scope" value="Bacteria"/>
</dbReference>
<dbReference type="HOGENOM" id="CLU_120359_1_0_7"/>
<dbReference type="OrthoDB" id="5324700at2"/>
<dbReference type="Proteomes" id="UP000000799">
    <property type="component" value="Chromosome"/>
</dbReference>
<dbReference type="HAMAP" id="MF_02110">
    <property type="entry name" value="UPF0763"/>
    <property type="match status" value="1"/>
</dbReference>
<dbReference type="InterPro" id="IPR019724">
    <property type="entry name" value="UPF0763"/>
</dbReference>
<dbReference type="Pfam" id="PF10788">
    <property type="entry name" value="DUF2603"/>
    <property type="match status" value="1"/>
</dbReference>